<name>PTN11_RAT</name>
<reference key="1">
    <citation type="journal article" date="1994" name="Biochem. Biophys. Res. Commun.">
        <title>Identification of protein-tyrosine phosphatases prevalent in adipocytes by molecular cloning.</title>
        <authorList>
            <person name="Ding W."/>
            <person name="Zhang W.R."/>
            <person name="Sullivan K."/>
            <person name="Hashimoto N."/>
            <person name="Goldstein B.J."/>
        </authorList>
    </citation>
    <scope>NUCLEOTIDE SEQUENCE [MRNA] (ISOFORM 1)</scope>
    <source>
        <strain>Sprague-Dawley</strain>
    </source>
</reference>
<reference key="2">
    <citation type="journal article" date="1994" name="J. Biol. Chem.">
        <title>RNA splicing regulates the activity of a SH2 domain-containing protein tyrosine phosphatase.</title>
        <authorList>
            <person name="Mei L."/>
            <person name="Dorherty C.A."/>
            <person name="Huganir R.L."/>
        </authorList>
    </citation>
    <scope>NUCLEOTIDE SEQUENCE [MRNA] (ISOFORMS 1 AND 2)</scope>
    <scope>CATALYTIC ACTIVITY</scope>
    <scope>ACTIVITY REGULATION</scope>
    <scope>BIOPHYSICOCHEMICAL PROPERTIES</scope>
    <scope>TISSUE SPECIFICITY</scope>
    <source>
        <strain>Sprague-Dawley</strain>
        <tissue>Brain</tissue>
    </source>
</reference>
<reference key="3">
    <citation type="journal article" date="1992" name="Eur. J. Biochem.">
        <title>Purification and characterization of a rat liver protein-tyrosine phosphatase with sequence similarity to src-homology region 2.</title>
        <authorList>
            <person name="Hiraga A."/>
            <person name="Munakata H."/>
            <person name="Hata K."/>
            <person name="Suzuki Y."/>
            <person name="Tsuiki S."/>
        </authorList>
    </citation>
    <scope>PARTIAL PROTEIN SEQUENCE</scope>
</reference>
<reference key="4">
    <citation type="journal article" date="1996" name="J. Biol. Chem.">
        <title>Activation of protein-tyrosine phosphatase SH-PTP2 by a tyrosine-based activation motif of a novel brain molecule.</title>
        <authorList>
            <person name="Ohnishi H."/>
            <person name="Kubota M."/>
            <person name="Ohtake A."/>
            <person name="Sato K."/>
            <person name="Sano S."/>
        </authorList>
    </citation>
    <scope>INTERACTION WITH PTPNS1</scope>
</reference>
<reference key="5">
    <citation type="journal article" date="1997" name="Nature">
        <title>A family of proteins that inhibit signalling through tyrosine kinase receptors.</title>
        <authorList>
            <person name="Kharitonenkov A."/>
            <person name="Chen Z."/>
            <person name="Sures I."/>
            <person name="Wang H."/>
            <person name="Schilling J."/>
            <person name="Ullrich A."/>
        </authorList>
    </citation>
    <scope>INTERACTION WITH PTPNS1</scope>
</reference>
<reference key="6">
    <citation type="journal article" date="2006" name="Cancer Res.">
        <title>ROS fusion tyrosine kinase activates a SH2 domain-containing phosphatase-2/phosphatidylinositol 3-kinase/mammalian target of rapamycin signaling axis to form glioblastoma in mice.</title>
        <authorList>
            <person name="Charest A."/>
            <person name="Wilker E.W."/>
            <person name="McLaughlin M.E."/>
            <person name="Lane K."/>
            <person name="Gowda R."/>
            <person name="Coven S."/>
            <person name="McMahon K."/>
            <person name="Kovach S."/>
            <person name="Feng Y."/>
            <person name="Yaffe M.B."/>
            <person name="Jacks T."/>
            <person name="Housman D."/>
        </authorList>
    </citation>
    <scope>INTERACTION WITH ROS1</scope>
</reference>
<reference key="7">
    <citation type="journal article" date="2012" name="Nat. Commun.">
        <title>Quantitative maps of protein phosphorylation sites across 14 different rat organs and tissues.</title>
        <authorList>
            <person name="Lundby A."/>
            <person name="Secher A."/>
            <person name="Lage K."/>
            <person name="Nordsborg N.B."/>
            <person name="Dmytriyev A."/>
            <person name="Lundby C."/>
            <person name="Olsen J.V."/>
        </authorList>
    </citation>
    <scope>PHOSPHORYLATION [LARGE SCALE ANALYSIS] AT TYR-62</scope>
    <scope>IDENTIFICATION BY MASS SPECTROMETRY [LARGE SCALE ANALYSIS]</scope>
</reference>
<proteinExistence type="evidence at protein level"/>
<keyword id="KW-0007">Acetylation</keyword>
<keyword id="KW-0025">Alternative splicing</keyword>
<keyword id="KW-0963">Cytoplasm</keyword>
<keyword id="KW-0903">Direct protein sequencing</keyword>
<keyword id="KW-0378">Hydrolase</keyword>
<keyword id="KW-0597">Phosphoprotein</keyword>
<keyword id="KW-0904">Protein phosphatase</keyword>
<keyword id="KW-1185">Reference proteome</keyword>
<keyword id="KW-0677">Repeat</keyword>
<keyword id="KW-0727">SH2 domain</keyword>
<comment type="function">
    <text evidence="2 3">Acts downstream of various receptor and cytoplasmic protein tyrosine kinases to participate in the signal transduction from the cell surface to the nucleus (By similarity). Positively regulates MAPK signal transduction pathway (By similarity). Dephosphorylates GAB1, ARHGAP35 and EGFR (By similarity). Dephosphorylates ROCK2 at 'Tyr-722' resulting in stimulation of its RhoA binding activity (By similarity). Dephosphorylates CDC73 (By similarity). Dephosphorylates SOX9 on tyrosine residues, leading to inactivate SOX9 and promote ossification (By similarity). Dephosphorylates tyrosine-phosphorylated NEDD9/CAS-L (By similarity).</text>
</comment>
<comment type="catalytic activity">
    <reaction evidence="6 8">
        <text>O-phospho-L-tyrosyl-[protein] + H2O = L-tyrosyl-[protein] + phosphate</text>
        <dbReference type="Rhea" id="RHEA:10684"/>
        <dbReference type="Rhea" id="RHEA-COMP:10136"/>
        <dbReference type="Rhea" id="RHEA-COMP:20101"/>
        <dbReference type="ChEBI" id="CHEBI:15377"/>
        <dbReference type="ChEBI" id="CHEBI:43474"/>
        <dbReference type="ChEBI" id="CHEBI:46858"/>
        <dbReference type="ChEBI" id="CHEBI:61978"/>
        <dbReference type="EC" id="3.1.3.48"/>
    </reaction>
</comment>
<comment type="activity regulation">
    <text evidence="8">Inhibited by orthovanadate, molybdate and spermidine.</text>
</comment>
<comment type="biophysicochemical properties">
    <kinetics>
        <KM evidence="8">18 mM for pNPP (isoform 1)</KM>
        <KM evidence="8">48 uM for nAChR (isoform 1)</KM>
        <KM evidence="8">1.3 uM for MBP (isoform 1)</KM>
        <KM evidence="8">15 mM for pNPP (isoform 2)</KM>
        <KM evidence="8">13 uM for nAChR (isoform 2)</KM>
        <KM evidence="8">0.067 uM for MBP (isoform 2)</KM>
        <Vmax evidence="8">120.0 umol/min/mg enzyme toward pNPP (isoform 1)</Vmax>
        <Vmax evidence="8">220.0 nmol/min/mg enzyme toward nAChR (isoform 1)</Vmax>
        <Vmax evidence="8">210.0 nmol/min/mg enzyme toward MBP (isoform 1)</Vmax>
        <Vmax evidence="8">16.0 umol/min/mg enzyme toward pNPP (isoform 2)</Vmax>
        <Vmax evidence="8">98.0 nmol/min/mg enzyme toward nAChR (isoform 2)</Vmax>
        <Vmax evidence="8">15.0 nmol/min/mg enzyme toward MBP (isoform 2)</Vmax>
    </kinetics>
    <phDependence>
        <text evidence="8">Optimum pH is 7.0-7.5 (isoform 1). Optimum pH is 8.5 (isoform 2).</text>
    </phDependence>
</comment>
<comment type="subunit">
    <text evidence="2 3 7 9 10">Interacts with phosphorylated SIT1, LIME1, BCAR3 and MZPL1. Interacts with FCRL4, FCRL6, ANKHD1, SHB, INPP5D/SHIP1 and CD84 (By similarity). Interacts with MILR1 (tyrosine-phosphorylated). Interacts with FLT1 (tyrosine-phosphorylated), FLT3 (tyrosine-phosphorylated), FLT4 (tyrosine-phosphorylated), KIT and GRB2 (By similarity). Interacts with PTPNS1. Interacts with KIR2DL1; the interaction is enhanced by ARRB2. Interacts (via SH2 domain) with TEK/TIE2 (tyrosine phosphorylated) (By similarity). Interacts with GAB2 (By similarity). Interacts with TERT; the interaction retains TERT in the nucleus. Interacts with PECAM1 and FER. Interacts with EPHA2 (activated); participates in PTK2/FAK1 dephosphorylation in EPHA2 downstream signaling. Interacts with PDGFRA (tyrosine phosphorylated). Interacts with PDGFRB (tyrosine phosphorylated); this interaction increases the PTPN11 phosphatase activity (By similarity). Interacts with ROS1; this mediates PTPN11 phosphorylation. Interacts with CEACAM1 (via cytoplasmic domain); this interaction depends on the monomer/dimer equilibrium and is phosphorylation-dependent (By similarity). Interacts with MPIG6B (via ITIM motif) (By similarity). Interacts with SIGLEC10 (By similarity). Interacts with CLEC12B (via ITIM motif); this interaction triggers dephosphorylation and activation of PTPN11. Interacts (via SH2 domains) with NEDD9/CAS-L; the interaction is enhanced when NEDD9/CAS-L is tyrosine phosphorylated (By similarity).</text>
</comment>
<comment type="interaction">
    <interactant intactId="EBI-7180604">
        <id>P41499</id>
    </interactant>
    <interactant intactId="EBI-8656708">
        <id>Q62689</id>
        <label>Jak2</label>
    </interactant>
    <organismsDiffer>false</organismsDiffer>
    <experiments>3</experiments>
</comment>
<comment type="interaction">
    <interactant intactId="EBI-7180604">
        <id>P41499</id>
    </interactant>
    <interactant intactId="EBI-7945080">
        <id>P97710</id>
        <label>Sirpa</label>
    </interactant>
    <organismsDiffer>false</organismsDiffer>
    <experiments>3</experiments>
</comment>
<comment type="interaction">
    <interactant intactId="EBI-7180604">
        <id>P41499</id>
    </interactant>
    <interactant intactId="EBI-641237">
        <id>P09619</id>
        <label>PDGFRB</label>
    </interactant>
    <organismsDiffer>true</organismsDiffer>
    <experiments>4</experiments>
</comment>
<comment type="subcellular location">
    <subcellularLocation>
        <location evidence="1">Cytoplasm</location>
    </subcellularLocation>
</comment>
<comment type="alternative products">
    <event type="alternative splicing"/>
    <isoform>
        <id>P41499-2</id>
        <name>1</name>
        <name>PTP1D</name>
        <sequence type="displayed"/>
    </isoform>
    <isoform>
        <id>P41499-1</id>
        <name>2</name>
        <name>PTP1Di</name>
        <sequence type="described" ref="VSP_060441"/>
    </isoform>
</comment>
<comment type="tissue specificity">
    <text evidence="8">Expressed in brain, muscle and lung.</text>
</comment>
<comment type="domain">
    <text>The SH2 domains repress phosphatase activity. Binding of these domains to phosphotyrosine-containing proteins relieves this auto-inhibition, possibly by inducing a conformational change in the enzyme.</text>
</comment>
<comment type="PTM">
    <text evidence="1">Phosphorylated on Tyr-542 and Tyr-580 upon receptor protein tyrosine kinase activation; which creates a binding site for GRB2 and other SH2-containing proteins. Phosphorylated upon activation of the receptor-type kinase FLT3. Phosphorylated upon activation of the receptor-type kinase PDGFRA. Phosphorylated by activated PDGFRB (By similarity).</text>
</comment>
<comment type="similarity">
    <text evidence="11">Belongs to the protein-tyrosine phosphatase family. Non-receptor class 2 subfamily.</text>
</comment>
<accession>P41499</accession>
<accession>Q62626</accession>
<gene>
    <name type="primary">Ptpn11</name>
</gene>
<organism>
    <name type="scientific">Rattus norvegicus</name>
    <name type="common">Rat</name>
    <dbReference type="NCBI Taxonomy" id="10116"/>
    <lineage>
        <taxon>Eukaryota</taxon>
        <taxon>Metazoa</taxon>
        <taxon>Chordata</taxon>
        <taxon>Craniata</taxon>
        <taxon>Vertebrata</taxon>
        <taxon>Euteleostomi</taxon>
        <taxon>Mammalia</taxon>
        <taxon>Eutheria</taxon>
        <taxon>Euarchontoglires</taxon>
        <taxon>Glires</taxon>
        <taxon>Rodentia</taxon>
        <taxon>Myomorpha</taxon>
        <taxon>Muroidea</taxon>
        <taxon>Muridae</taxon>
        <taxon>Murinae</taxon>
        <taxon>Rattus</taxon>
    </lineage>
</organism>
<dbReference type="EC" id="3.1.3.48" evidence="8"/>
<dbReference type="EMBL" id="U09307">
    <property type="protein sequence ID" value="AAA20543.1"/>
    <property type="molecule type" value="mRNA"/>
</dbReference>
<dbReference type="EMBL" id="U05963">
    <property type="protein sequence ID" value="AAA19133.1"/>
    <property type="molecule type" value="mRNA"/>
</dbReference>
<dbReference type="PIR" id="A53593">
    <property type="entry name" value="A53593"/>
</dbReference>
<dbReference type="RefSeq" id="NP_001171064.1">
    <molecule id="P41499-1"/>
    <property type="nucleotide sequence ID" value="NM_001177593.1"/>
</dbReference>
<dbReference type="RefSeq" id="NP_037220.2">
    <molecule id="P41499-2"/>
    <property type="nucleotide sequence ID" value="NM_013088.2"/>
</dbReference>
<dbReference type="SMR" id="P41499"/>
<dbReference type="BioGRID" id="247651">
    <property type="interactions" value="6"/>
</dbReference>
<dbReference type="CORUM" id="P41499"/>
<dbReference type="DIP" id="DIP-47397N"/>
<dbReference type="ELM" id="P41499"/>
<dbReference type="FunCoup" id="P41499">
    <property type="interactions" value="4041"/>
</dbReference>
<dbReference type="IntAct" id="P41499">
    <property type="interactions" value="31"/>
</dbReference>
<dbReference type="MINT" id="P41499"/>
<dbReference type="STRING" id="10116.ENSRNOP00000041842"/>
<dbReference type="GlyGen" id="P41499">
    <property type="glycosylation" value="1 site"/>
</dbReference>
<dbReference type="iPTMnet" id="P41499"/>
<dbReference type="PhosphoSitePlus" id="P41499"/>
<dbReference type="jPOST" id="P41499"/>
<dbReference type="PaxDb" id="10116-ENSRNOP00000041842"/>
<dbReference type="GeneID" id="25622"/>
<dbReference type="KEGG" id="rno:25622"/>
<dbReference type="UCSC" id="RGD:3447">
    <molecule id="P41499-2"/>
    <property type="organism name" value="rat"/>
</dbReference>
<dbReference type="AGR" id="RGD:3447"/>
<dbReference type="CTD" id="5781"/>
<dbReference type="RGD" id="3447">
    <property type="gene designation" value="Ptpn11"/>
</dbReference>
<dbReference type="VEuPathDB" id="HostDB:ENSRNOG00000030124"/>
<dbReference type="eggNOG" id="KOG0790">
    <property type="taxonomic scope" value="Eukaryota"/>
</dbReference>
<dbReference type="HOGENOM" id="CLU_001645_9_10_1"/>
<dbReference type="InParanoid" id="P41499"/>
<dbReference type="OrthoDB" id="13254at9989"/>
<dbReference type="PhylomeDB" id="P41499"/>
<dbReference type="TreeFam" id="TF351632"/>
<dbReference type="Reactome" id="R-RNO-1059683">
    <property type="pathway name" value="Interleukin-6 signaling"/>
</dbReference>
<dbReference type="Reactome" id="R-RNO-109704">
    <property type="pathway name" value="PI3K Cascade"/>
</dbReference>
<dbReference type="Reactome" id="R-RNO-110056">
    <property type="pathway name" value="MAPK3 (ERK1) activation"/>
</dbReference>
<dbReference type="Reactome" id="R-RNO-112411">
    <property type="pathway name" value="MAPK1 (ERK2) activation"/>
</dbReference>
<dbReference type="Reactome" id="R-RNO-114604">
    <property type="pathway name" value="GPVI-mediated activation cascade"/>
</dbReference>
<dbReference type="Reactome" id="R-RNO-1257604">
    <property type="pathway name" value="PIP3 activates AKT signaling"/>
</dbReference>
<dbReference type="Reactome" id="R-RNO-1295596">
    <property type="pathway name" value="Spry regulation of FGF signaling"/>
</dbReference>
<dbReference type="Reactome" id="R-RNO-1433557">
    <property type="pathway name" value="Signaling by SCF-KIT"/>
</dbReference>
<dbReference type="Reactome" id="R-RNO-180292">
    <property type="pathway name" value="GAB1 signalosome"/>
</dbReference>
<dbReference type="Reactome" id="R-RNO-186763">
    <property type="pathway name" value="Downstream signal transduction"/>
</dbReference>
<dbReference type="Reactome" id="R-RNO-210990">
    <property type="pathway name" value="PECAM1 interactions"/>
</dbReference>
<dbReference type="Reactome" id="R-RNO-210993">
    <property type="pathway name" value="Tie2 Signaling"/>
</dbReference>
<dbReference type="Reactome" id="R-RNO-389513">
    <property type="pathway name" value="Co-inhibition by CTLA4"/>
</dbReference>
<dbReference type="Reactome" id="R-RNO-389948">
    <property type="pathway name" value="Co-inhibition by PD-1"/>
</dbReference>
<dbReference type="Reactome" id="R-RNO-432142">
    <property type="pathway name" value="Platelet sensitization by LDL"/>
</dbReference>
<dbReference type="Reactome" id="R-RNO-512988">
    <property type="pathway name" value="Interleukin-3, Interleukin-5 and GM-CSF signaling"/>
</dbReference>
<dbReference type="Reactome" id="R-RNO-5654689">
    <property type="pathway name" value="PI-3K cascade:FGFR1"/>
</dbReference>
<dbReference type="Reactome" id="R-RNO-5654693">
    <property type="pathway name" value="FRS-mediated FGFR1 signaling"/>
</dbReference>
<dbReference type="Reactome" id="R-RNO-5654695">
    <property type="pathway name" value="PI-3K cascade:FGFR2"/>
</dbReference>
<dbReference type="Reactome" id="R-RNO-5654700">
    <property type="pathway name" value="FRS-mediated FGFR2 signaling"/>
</dbReference>
<dbReference type="Reactome" id="R-RNO-5654706">
    <property type="pathway name" value="FRS-mediated FGFR3 signaling"/>
</dbReference>
<dbReference type="Reactome" id="R-RNO-5654710">
    <property type="pathway name" value="PI-3K cascade:FGFR3"/>
</dbReference>
<dbReference type="Reactome" id="R-RNO-5654712">
    <property type="pathway name" value="FRS-mediated FGFR4 signaling"/>
</dbReference>
<dbReference type="Reactome" id="R-RNO-5654720">
    <property type="pathway name" value="PI-3K cascade:FGFR4"/>
</dbReference>
<dbReference type="Reactome" id="R-RNO-5654726">
    <property type="pathway name" value="Negative regulation of FGFR1 signaling"/>
</dbReference>
<dbReference type="Reactome" id="R-RNO-5654727">
    <property type="pathway name" value="Negative regulation of FGFR2 signaling"/>
</dbReference>
<dbReference type="Reactome" id="R-RNO-5654732">
    <property type="pathway name" value="Negative regulation of FGFR3 signaling"/>
</dbReference>
<dbReference type="Reactome" id="R-RNO-5654733">
    <property type="pathway name" value="Negative regulation of FGFR4 signaling"/>
</dbReference>
<dbReference type="Reactome" id="R-RNO-6811558">
    <property type="pathway name" value="PI5P, PP2A and IER3 Regulate PI3K/AKT Signaling"/>
</dbReference>
<dbReference type="Reactome" id="R-RNO-8853659">
    <property type="pathway name" value="RET signaling"/>
</dbReference>
<dbReference type="Reactome" id="R-RNO-8854691">
    <property type="pathway name" value="Interleukin-20 family signaling"/>
</dbReference>
<dbReference type="Reactome" id="R-RNO-8865999">
    <property type="pathway name" value="MET activates PTPN11"/>
</dbReference>
<dbReference type="Reactome" id="R-RNO-8934593">
    <property type="pathway name" value="Regulation of RUNX1 Expression and Activity"/>
</dbReference>
<dbReference type="Reactome" id="R-RNO-912694">
    <property type="pathway name" value="Regulation of IFNA/IFNB signaling"/>
</dbReference>
<dbReference type="Reactome" id="R-RNO-936964">
    <property type="pathway name" value="Activation of IRF3, IRF7 mediated by TBK1, IKKEpsilon (IKBKE)"/>
</dbReference>
<dbReference type="Reactome" id="R-RNO-9674555">
    <property type="pathway name" value="Signaling by CSF3 (G-CSF)"/>
</dbReference>
<dbReference type="Reactome" id="R-RNO-9927353">
    <property type="pathway name" value="Co-inhibition by BTLA"/>
</dbReference>
<dbReference type="PRO" id="PR:P41499"/>
<dbReference type="Proteomes" id="UP000002494">
    <property type="component" value="Chromosome 12"/>
</dbReference>
<dbReference type="Bgee" id="ENSRNOG00000030124">
    <property type="expression patterns" value="Expressed in Ammon's horn and 19 other cell types or tissues"/>
</dbReference>
<dbReference type="GO" id="GO:0005737">
    <property type="term" value="C:cytoplasm"/>
    <property type="evidence" value="ECO:0000266"/>
    <property type="project" value="RGD"/>
</dbReference>
<dbReference type="GO" id="GO:0005829">
    <property type="term" value="C:cytosol"/>
    <property type="evidence" value="ECO:0000266"/>
    <property type="project" value="RGD"/>
</dbReference>
<dbReference type="GO" id="GO:0005634">
    <property type="term" value="C:nucleus"/>
    <property type="evidence" value="ECO:0000250"/>
    <property type="project" value="UniProtKB"/>
</dbReference>
<dbReference type="GO" id="GO:0044853">
    <property type="term" value="C:plasma membrane raft"/>
    <property type="evidence" value="ECO:0000314"/>
    <property type="project" value="RGD"/>
</dbReference>
<dbReference type="GO" id="GO:0032991">
    <property type="term" value="C:protein-containing complex"/>
    <property type="evidence" value="ECO:0000314"/>
    <property type="project" value="RGD"/>
</dbReference>
<dbReference type="GO" id="GO:0045296">
    <property type="term" value="F:cadherin binding"/>
    <property type="evidence" value="ECO:0000266"/>
    <property type="project" value="RGD"/>
</dbReference>
<dbReference type="GO" id="GO:0050839">
    <property type="term" value="F:cell adhesion molecule binding"/>
    <property type="evidence" value="ECO:0000353"/>
    <property type="project" value="RGD"/>
</dbReference>
<dbReference type="GO" id="GO:0031748">
    <property type="term" value="F:D1 dopamine receptor binding"/>
    <property type="evidence" value="ECO:0000353"/>
    <property type="project" value="RGD"/>
</dbReference>
<dbReference type="GO" id="GO:0005158">
    <property type="term" value="F:insulin receptor binding"/>
    <property type="evidence" value="ECO:0000314"/>
    <property type="project" value="RGD"/>
</dbReference>
<dbReference type="GO" id="GO:0043560">
    <property type="term" value="F:insulin receptor substrate binding"/>
    <property type="evidence" value="ECO:0000353"/>
    <property type="project" value="RGD"/>
</dbReference>
<dbReference type="GO" id="GO:0060090">
    <property type="term" value="F:molecular adaptor activity"/>
    <property type="evidence" value="ECO:0000266"/>
    <property type="project" value="RGD"/>
</dbReference>
<dbReference type="GO" id="GO:0004726">
    <property type="term" value="F:non-membrane spanning protein tyrosine phosphatase activity"/>
    <property type="evidence" value="ECO:0000250"/>
    <property type="project" value="UniProtKB"/>
</dbReference>
<dbReference type="GO" id="GO:0051428">
    <property type="term" value="F:peptide hormone receptor binding"/>
    <property type="evidence" value="ECO:0000266"/>
    <property type="project" value="RGD"/>
</dbReference>
<dbReference type="GO" id="GO:0043274">
    <property type="term" value="F:phospholipase binding"/>
    <property type="evidence" value="ECO:0000314"/>
    <property type="project" value="RGD"/>
</dbReference>
<dbReference type="GO" id="GO:0004721">
    <property type="term" value="F:phosphoprotein phosphatase activity"/>
    <property type="evidence" value="ECO:0000266"/>
    <property type="project" value="RGD"/>
</dbReference>
<dbReference type="GO" id="GO:0001784">
    <property type="term" value="F:phosphotyrosine residue binding"/>
    <property type="evidence" value="ECO:0000266"/>
    <property type="project" value="RGD"/>
</dbReference>
<dbReference type="GO" id="GO:0019904">
    <property type="term" value="F:protein domain specific binding"/>
    <property type="evidence" value="ECO:0000353"/>
    <property type="project" value="RGD"/>
</dbReference>
<dbReference type="GO" id="GO:0019901">
    <property type="term" value="F:protein kinase binding"/>
    <property type="evidence" value="ECO:0000266"/>
    <property type="project" value="RGD"/>
</dbReference>
<dbReference type="GO" id="GO:1990782">
    <property type="term" value="F:protein tyrosine kinase binding"/>
    <property type="evidence" value="ECO:0000353"/>
    <property type="project" value="RGD"/>
</dbReference>
<dbReference type="GO" id="GO:0004725">
    <property type="term" value="F:protein tyrosine phosphatase activity"/>
    <property type="evidence" value="ECO:0000314"/>
    <property type="project" value="RGD"/>
</dbReference>
<dbReference type="GO" id="GO:0030971">
    <property type="term" value="F:receptor tyrosine kinase binding"/>
    <property type="evidence" value="ECO:0000353"/>
    <property type="project" value="RGD"/>
</dbReference>
<dbReference type="GO" id="GO:0030159">
    <property type="term" value="F:signaling receptor complex adaptor activity"/>
    <property type="evidence" value="ECO:0000266"/>
    <property type="project" value="RGD"/>
</dbReference>
<dbReference type="GO" id="GO:0036302">
    <property type="term" value="P:atrioventricular canal development"/>
    <property type="evidence" value="ECO:0000266"/>
    <property type="project" value="RGD"/>
</dbReference>
<dbReference type="GO" id="GO:0007409">
    <property type="term" value="P:axonogenesis"/>
    <property type="evidence" value="ECO:0000266"/>
    <property type="project" value="RGD"/>
</dbReference>
<dbReference type="GO" id="GO:0060020">
    <property type="term" value="P:Bergmann glial cell differentiation"/>
    <property type="evidence" value="ECO:0000266"/>
    <property type="project" value="RGD"/>
</dbReference>
<dbReference type="GO" id="GO:0007420">
    <property type="term" value="P:brain development"/>
    <property type="evidence" value="ECO:0000266"/>
    <property type="project" value="RGD"/>
</dbReference>
<dbReference type="GO" id="GO:1904385">
    <property type="term" value="P:cellular response to angiotensin"/>
    <property type="evidence" value="ECO:0000270"/>
    <property type="project" value="RGD"/>
</dbReference>
<dbReference type="GO" id="GO:0071364">
    <property type="term" value="P:cellular response to epidermal growth factor stimulus"/>
    <property type="evidence" value="ECO:0000250"/>
    <property type="project" value="UniProtKB"/>
</dbReference>
<dbReference type="GO" id="GO:0070301">
    <property type="term" value="P:cellular response to hydrogen peroxide"/>
    <property type="evidence" value="ECO:0000270"/>
    <property type="project" value="RGD"/>
</dbReference>
<dbReference type="GO" id="GO:1990314">
    <property type="term" value="P:cellular response to insulin-like growth factor stimulus"/>
    <property type="evidence" value="ECO:0000270"/>
    <property type="project" value="RGD"/>
</dbReference>
<dbReference type="GO" id="GO:0071260">
    <property type="term" value="P:cellular response to mechanical stimulus"/>
    <property type="evidence" value="ECO:0000353"/>
    <property type="project" value="RGD"/>
</dbReference>
<dbReference type="GO" id="GO:0021697">
    <property type="term" value="P:cerebellar cortex formation"/>
    <property type="evidence" value="ECO:0000266"/>
    <property type="project" value="RGD"/>
</dbReference>
<dbReference type="GO" id="GO:0000077">
    <property type="term" value="P:DNA damage checkpoint signaling"/>
    <property type="evidence" value="ECO:0000266"/>
    <property type="project" value="RGD"/>
</dbReference>
<dbReference type="GO" id="GO:0048013">
    <property type="term" value="P:ephrin receptor signaling pathway"/>
    <property type="evidence" value="ECO:0000250"/>
    <property type="project" value="UniProtKB"/>
</dbReference>
<dbReference type="GO" id="GO:0007173">
    <property type="term" value="P:epidermal growth factor receptor signaling pathway"/>
    <property type="evidence" value="ECO:0000266"/>
    <property type="project" value="RGD"/>
</dbReference>
<dbReference type="GO" id="GO:0038127">
    <property type="term" value="P:ERBB signaling pathway"/>
    <property type="evidence" value="ECO:0000266"/>
    <property type="project" value="RGD"/>
</dbReference>
<dbReference type="GO" id="GO:0060325">
    <property type="term" value="P:face morphogenesis"/>
    <property type="evidence" value="ECO:0000266"/>
    <property type="project" value="RGD"/>
</dbReference>
<dbReference type="GO" id="GO:0008543">
    <property type="term" value="P:fibroblast growth factor receptor signaling pathway"/>
    <property type="evidence" value="ECO:0000266"/>
    <property type="project" value="RGD"/>
</dbReference>
<dbReference type="GO" id="GO:0048806">
    <property type="term" value="P:genitalia development"/>
    <property type="evidence" value="ECO:0000266"/>
    <property type="project" value="RGD"/>
</dbReference>
<dbReference type="GO" id="GO:0042593">
    <property type="term" value="P:glucose homeostasis"/>
    <property type="evidence" value="ECO:0000266"/>
    <property type="project" value="RGD"/>
</dbReference>
<dbReference type="GO" id="GO:0007507">
    <property type="term" value="P:heart development"/>
    <property type="evidence" value="ECO:0000266"/>
    <property type="project" value="RGD"/>
</dbReference>
<dbReference type="GO" id="GO:0048873">
    <property type="term" value="P:homeostasis of number of cells within a tissue"/>
    <property type="evidence" value="ECO:0000266"/>
    <property type="project" value="RGD"/>
</dbReference>
<dbReference type="GO" id="GO:0042445">
    <property type="term" value="P:hormone metabolic process"/>
    <property type="evidence" value="ECO:0000266"/>
    <property type="project" value="RGD"/>
</dbReference>
<dbReference type="GO" id="GO:0009755">
    <property type="term" value="P:hormone-mediated signaling pathway"/>
    <property type="evidence" value="ECO:0000266"/>
    <property type="project" value="RGD"/>
</dbReference>
<dbReference type="GO" id="GO:0048839">
    <property type="term" value="P:inner ear development"/>
    <property type="evidence" value="ECO:0000266"/>
    <property type="project" value="RGD"/>
</dbReference>
<dbReference type="GO" id="GO:0007229">
    <property type="term" value="P:integrin-mediated signaling pathway"/>
    <property type="evidence" value="ECO:0000266"/>
    <property type="project" value="RGD"/>
</dbReference>
<dbReference type="GO" id="GO:0061582">
    <property type="term" value="P:intestinal epithelial cell migration"/>
    <property type="evidence" value="ECO:0000266"/>
    <property type="project" value="RGD"/>
</dbReference>
<dbReference type="GO" id="GO:0006629">
    <property type="term" value="P:lipid metabolic process"/>
    <property type="evidence" value="ECO:0000266"/>
    <property type="project" value="RGD"/>
</dbReference>
<dbReference type="GO" id="GO:0035855">
    <property type="term" value="P:megakaryocyte development"/>
    <property type="evidence" value="ECO:0000266"/>
    <property type="project" value="RGD"/>
</dbReference>
<dbReference type="GO" id="GO:0032528">
    <property type="term" value="P:microvillus organization"/>
    <property type="evidence" value="ECO:0000266"/>
    <property type="project" value="RGD"/>
</dbReference>
<dbReference type="GO" id="GO:0035264">
    <property type="term" value="P:multicellular organism growth"/>
    <property type="evidence" value="ECO:0000266"/>
    <property type="project" value="RGD"/>
</dbReference>
<dbReference type="GO" id="GO:0033629">
    <property type="term" value="P:negative regulation of cell adhesion mediated by integrin"/>
    <property type="evidence" value="ECO:0000266"/>
    <property type="project" value="RGD"/>
</dbReference>
<dbReference type="GO" id="GO:0032331">
    <property type="term" value="P:negative regulation of chondrocyte differentiation"/>
    <property type="evidence" value="ECO:0000250"/>
    <property type="project" value="UniProtKB"/>
</dbReference>
<dbReference type="GO" id="GO:0051463">
    <property type="term" value="P:negative regulation of cortisol secretion"/>
    <property type="evidence" value="ECO:0000266"/>
    <property type="project" value="RGD"/>
</dbReference>
<dbReference type="GO" id="GO:0060125">
    <property type="term" value="P:negative regulation of growth hormone secretion"/>
    <property type="evidence" value="ECO:0000266"/>
    <property type="project" value="RGD"/>
</dbReference>
<dbReference type="GO" id="GO:0046888">
    <property type="term" value="P:negative regulation of hormone secretion"/>
    <property type="evidence" value="ECO:0000266"/>
    <property type="project" value="RGD"/>
</dbReference>
<dbReference type="GO" id="GO:0046676">
    <property type="term" value="P:negative regulation of insulin secretion"/>
    <property type="evidence" value="ECO:0000266"/>
    <property type="project" value="RGD"/>
</dbReference>
<dbReference type="GO" id="GO:1902564">
    <property type="term" value="P:negative regulation of neutrophil activation"/>
    <property type="evidence" value="ECO:0000266"/>
    <property type="project" value="RGD"/>
</dbReference>
<dbReference type="GO" id="GO:0042130">
    <property type="term" value="P:negative regulation of T cell proliferation"/>
    <property type="evidence" value="ECO:0000266"/>
    <property type="project" value="RGD"/>
</dbReference>
<dbReference type="GO" id="GO:0032480">
    <property type="term" value="P:negative regulation of type I interferon production"/>
    <property type="evidence" value="ECO:0000266"/>
    <property type="project" value="RGD"/>
</dbReference>
<dbReference type="GO" id="GO:0048011">
    <property type="term" value="P:neurotrophin TRK receptor signaling pathway"/>
    <property type="evidence" value="ECO:0000266"/>
    <property type="project" value="RGD"/>
</dbReference>
<dbReference type="GO" id="GO:0035265">
    <property type="term" value="P:organ growth"/>
    <property type="evidence" value="ECO:0000266"/>
    <property type="project" value="RGD"/>
</dbReference>
<dbReference type="GO" id="GO:0035335">
    <property type="term" value="P:peptidyl-tyrosine dephosphorylation"/>
    <property type="evidence" value="ECO:0000250"/>
    <property type="project" value="UniProtKB"/>
</dbReference>
<dbReference type="GO" id="GO:0030220">
    <property type="term" value="P:platelet formation"/>
    <property type="evidence" value="ECO:0000266"/>
    <property type="project" value="RGD"/>
</dbReference>
<dbReference type="GO" id="GO:0048008">
    <property type="term" value="P:platelet-derived growth factor receptor signaling pathway"/>
    <property type="evidence" value="ECO:0000266"/>
    <property type="project" value="RGD"/>
</dbReference>
<dbReference type="GO" id="GO:0046326">
    <property type="term" value="P:positive regulation of D-glucose import"/>
    <property type="evidence" value="ECO:0000266"/>
    <property type="project" value="RGD"/>
</dbReference>
<dbReference type="GO" id="GO:0070374">
    <property type="term" value="P:positive regulation of ERK1 and ERK2 cascade"/>
    <property type="evidence" value="ECO:0000250"/>
    <property type="project" value="UniProtKB"/>
</dbReference>
<dbReference type="GO" id="GO:0051894">
    <property type="term" value="P:positive regulation of focal adhesion assembly"/>
    <property type="evidence" value="ECO:0000315"/>
    <property type="project" value="RGD"/>
</dbReference>
<dbReference type="GO" id="GO:0046887">
    <property type="term" value="P:positive regulation of hormone secretion"/>
    <property type="evidence" value="ECO:0000266"/>
    <property type="project" value="RGD"/>
</dbReference>
<dbReference type="GO" id="GO:0046628">
    <property type="term" value="P:positive regulation of insulin receptor signaling pathway"/>
    <property type="evidence" value="ECO:0000266"/>
    <property type="project" value="RGD"/>
</dbReference>
<dbReference type="GO" id="GO:0032728">
    <property type="term" value="P:positive regulation of interferon-beta production"/>
    <property type="evidence" value="ECO:0000266"/>
    <property type="project" value="RGD"/>
</dbReference>
<dbReference type="GO" id="GO:1902533">
    <property type="term" value="P:positive regulation of intracellular signal transduction"/>
    <property type="evidence" value="ECO:0000266"/>
    <property type="project" value="RGD"/>
</dbReference>
<dbReference type="GO" id="GO:0031666">
    <property type="term" value="P:positive regulation of lipopolysaccharide-mediated signaling pathway"/>
    <property type="evidence" value="ECO:0000266"/>
    <property type="project" value="RGD"/>
</dbReference>
<dbReference type="GO" id="GO:0045931">
    <property type="term" value="P:positive regulation of mitotic cell cycle"/>
    <property type="evidence" value="ECO:0000266"/>
    <property type="project" value="RGD"/>
</dbReference>
<dbReference type="GO" id="GO:0045778">
    <property type="term" value="P:positive regulation of ossification"/>
    <property type="evidence" value="ECO:0000250"/>
    <property type="project" value="UniProtKB"/>
</dbReference>
<dbReference type="GO" id="GO:0051897">
    <property type="term" value="P:positive regulation of phosphatidylinositol 3-kinase/protein kinase B signal transduction"/>
    <property type="evidence" value="ECO:0000266"/>
    <property type="project" value="RGD"/>
</dbReference>
<dbReference type="GO" id="GO:0009967">
    <property type="term" value="P:positive regulation of signal transduction"/>
    <property type="evidence" value="ECO:0000266"/>
    <property type="project" value="RGD"/>
</dbReference>
<dbReference type="GO" id="GO:0032760">
    <property type="term" value="P:positive regulation of tumor necrosis factor production"/>
    <property type="evidence" value="ECO:0000266"/>
    <property type="project" value="RGD"/>
</dbReference>
<dbReference type="GO" id="GO:0033628">
    <property type="term" value="P:regulation of cell adhesion mediated by integrin"/>
    <property type="evidence" value="ECO:0000250"/>
    <property type="project" value="UniProtKB"/>
</dbReference>
<dbReference type="GO" id="GO:0043408">
    <property type="term" value="P:regulation of MAPK cascade"/>
    <property type="evidence" value="ECO:0000266"/>
    <property type="project" value="RGD"/>
</dbReference>
<dbReference type="GO" id="GO:0046825">
    <property type="term" value="P:regulation of protein export from nucleus"/>
    <property type="evidence" value="ECO:0000266"/>
    <property type="project" value="RGD"/>
</dbReference>
<dbReference type="GO" id="GO:0043254">
    <property type="term" value="P:regulation of protein-containing complex assembly"/>
    <property type="evidence" value="ECO:0000266"/>
    <property type="project" value="RGD"/>
</dbReference>
<dbReference type="GO" id="GO:0007165">
    <property type="term" value="P:signal transduction"/>
    <property type="evidence" value="ECO:0000266"/>
    <property type="project" value="RGD"/>
</dbReference>
<dbReference type="GO" id="GO:0048659">
    <property type="term" value="P:smooth muscle cell proliferation"/>
    <property type="evidence" value="ECO:0000270"/>
    <property type="project" value="RGD"/>
</dbReference>
<dbReference type="GO" id="GO:0006641">
    <property type="term" value="P:triglyceride metabolic process"/>
    <property type="evidence" value="ECO:0000266"/>
    <property type="project" value="RGD"/>
</dbReference>
<dbReference type="GO" id="GO:0042311">
    <property type="term" value="P:vasodilation"/>
    <property type="evidence" value="ECO:0000266"/>
    <property type="project" value="RGD"/>
</dbReference>
<dbReference type="CDD" id="cd14605">
    <property type="entry name" value="PTPc-N11"/>
    <property type="match status" value="1"/>
</dbReference>
<dbReference type="CDD" id="cd09931">
    <property type="entry name" value="SH2_C-SH2_SHP_like"/>
    <property type="match status" value="1"/>
</dbReference>
<dbReference type="CDD" id="cd10340">
    <property type="entry name" value="SH2_N-SH2_SHP_like"/>
    <property type="match status" value="1"/>
</dbReference>
<dbReference type="FunFam" id="3.30.505.10:FF:000012">
    <property type="entry name" value="Tyrosine-protein phosphatase non-receptor type"/>
    <property type="match status" value="1"/>
</dbReference>
<dbReference type="FunFam" id="3.30.505.10:FF:000018">
    <property type="entry name" value="Tyrosine-protein phosphatase non-receptor type"/>
    <property type="match status" value="1"/>
</dbReference>
<dbReference type="FunFam" id="3.90.190.10:FF:000018">
    <property type="entry name" value="Tyrosine-protein phosphatase non-receptor type"/>
    <property type="match status" value="1"/>
</dbReference>
<dbReference type="Gene3D" id="3.90.190.10">
    <property type="entry name" value="Protein tyrosine phosphatase superfamily"/>
    <property type="match status" value="1"/>
</dbReference>
<dbReference type="Gene3D" id="3.30.505.10">
    <property type="entry name" value="SH2 domain"/>
    <property type="match status" value="2"/>
</dbReference>
<dbReference type="InterPro" id="IPR029021">
    <property type="entry name" value="Prot-tyrosine_phosphatase-like"/>
</dbReference>
<dbReference type="InterPro" id="IPR000242">
    <property type="entry name" value="PTP_cat"/>
</dbReference>
<dbReference type="InterPro" id="IPR000980">
    <property type="entry name" value="SH2"/>
</dbReference>
<dbReference type="InterPro" id="IPR036860">
    <property type="entry name" value="SH2_dom_sf"/>
</dbReference>
<dbReference type="InterPro" id="IPR016130">
    <property type="entry name" value="Tyr_Pase_AS"/>
</dbReference>
<dbReference type="InterPro" id="IPR003595">
    <property type="entry name" value="Tyr_Pase_cat"/>
</dbReference>
<dbReference type="InterPro" id="IPR000387">
    <property type="entry name" value="Tyr_Pase_dom"/>
</dbReference>
<dbReference type="InterPro" id="IPR012152">
    <property type="entry name" value="Tyr_Pase_non-rcpt_typ-6/11"/>
</dbReference>
<dbReference type="PANTHER" id="PTHR46559">
    <property type="entry name" value="TYROSINE-PROTEIN PHOSPHATASE NON-RECEPTOR TYPE 11"/>
    <property type="match status" value="1"/>
</dbReference>
<dbReference type="PANTHER" id="PTHR46559:SF1">
    <property type="entry name" value="TYROSINE-PROTEIN PHOSPHATASE NON-RECEPTOR TYPE 11"/>
    <property type="match status" value="1"/>
</dbReference>
<dbReference type="Pfam" id="PF00017">
    <property type="entry name" value="SH2"/>
    <property type="match status" value="2"/>
</dbReference>
<dbReference type="Pfam" id="PF00102">
    <property type="entry name" value="Y_phosphatase"/>
    <property type="match status" value="1"/>
</dbReference>
<dbReference type="PIRSF" id="PIRSF000929">
    <property type="entry name" value="Tyr-Ptase_nr_6"/>
    <property type="match status" value="1"/>
</dbReference>
<dbReference type="PRINTS" id="PR00700">
    <property type="entry name" value="PRTYPHPHTASE"/>
</dbReference>
<dbReference type="PRINTS" id="PR00401">
    <property type="entry name" value="SH2DOMAIN"/>
</dbReference>
<dbReference type="SMART" id="SM00194">
    <property type="entry name" value="PTPc"/>
    <property type="match status" value="1"/>
</dbReference>
<dbReference type="SMART" id="SM00404">
    <property type="entry name" value="PTPc_motif"/>
    <property type="match status" value="1"/>
</dbReference>
<dbReference type="SMART" id="SM00252">
    <property type="entry name" value="SH2"/>
    <property type="match status" value="2"/>
</dbReference>
<dbReference type="SUPFAM" id="SSF52799">
    <property type="entry name" value="(Phosphotyrosine protein) phosphatases II"/>
    <property type="match status" value="1"/>
</dbReference>
<dbReference type="SUPFAM" id="SSF55550">
    <property type="entry name" value="SH2 domain"/>
    <property type="match status" value="2"/>
</dbReference>
<dbReference type="PROSITE" id="PS50001">
    <property type="entry name" value="SH2"/>
    <property type="match status" value="2"/>
</dbReference>
<dbReference type="PROSITE" id="PS00383">
    <property type="entry name" value="TYR_PHOSPHATASE_1"/>
    <property type="match status" value="1"/>
</dbReference>
<dbReference type="PROSITE" id="PS50056">
    <property type="entry name" value="TYR_PHOSPHATASE_2"/>
    <property type="match status" value="1"/>
</dbReference>
<dbReference type="PROSITE" id="PS50055">
    <property type="entry name" value="TYR_PHOSPHATASE_PTP"/>
    <property type="match status" value="1"/>
</dbReference>
<sequence>MTSRRWFHPNITGVEAENLLLTRGVDGSFLARPSKSNPGDFTLSVRRNGAVTHIKIQNTGDYYDLYGGEKFATLAELVQYYMEHHGQLKEKNGDVIELKYPLNCADPTSERWFHGHLSGKEAEKLLTEKGKHGSFLVRESQSHPGDFVLSVRTGDDKGESNDSKSKVTHVMIRCQELKYDVGGGERFDSLTDLVEHYKKNPMVETLGTVLQLKQPLNTTRINAAEIESRVRELSKLAETTDKVKQGFWEEFETLQQQECKLLYSRKEGQRQENKNKNRYKNILPFDHTRVVLHDGDPNEPVSDYINANIIMPEFETKCNNSKPKKSYIATQGCLQNTVNDFWRMVFQENSRVIVMTTKEVERGKSKCVKYWPDECALKEYGVMRVRNVRESAAHDYTLRELKLSKVGQGNTERTVWQYHFRTWPDHGVPSDPGGVLDFLEEVHHKQESIVDAGPVVVHCSAGIGRTGTFIVIDILIDIIREKGVDCDIDVPKTIQMVRSQRSGMVQTEAQYRFIYMAVQHYIETLQRRIEEEQKSKRKGHEYTNIKYSLVDQTSGDQSPLPPCTPTPPCAEMREDSARVYENVGLMQQQRSFR</sequence>
<evidence type="ECO:0000250" key="1"/>
<evidence type="ECO:0000250" key="2">
    <source>
        <dbReference type="UniProtKB" id="P35235"/>
    </source>
</evidence>
<evidence type="ECO:0000250" key="3">
    <source>
        <dbReference type="UniProtKB" id="Q06124"/>
    </source>
</evidence>
<evidence type="ECO:0000255" key="4">
    <source>
        <dbReference type="PROSITE-ProRule" id="PRU00160"/>
    </source>
</evidence>
<evidence type="ECO:0000255" key="5">
    <source>
        <dbReference type="PROSITE-ProRule" id="PRU00191"/>
    </source>
</evidence>
<evidence type="ECO:0000255" key="6">
    <source>
        <dbReference type="PROSITE-ProRule" id="PRU10044"/>
    </source>
</evidence>
<evidence type="ECO:0000269" key="7">
    <source>
    </source>
</evidence>
<evidence type="ECO:0000269" key="8">
    <source>
    </source>
</evidence>
<evidence type="ECO:0000269" key="9">
    <source>
    </source>
</evidence>
<evidence type="ECO:0000269" key="10">
    <source>
    </source>
</evidence>
<evidence type="ECO:0000305" key="11"/>
<evidence type="ECO:0007744" key="12">
    <source>
    </source>
</evidence>
<feature type="initiator methionine" description="Removed" evidence="3">
    <location>
        <position position="1"/>
    </location>
</feature>
<feature type="chain" id="PRO_0000094769" description="Tyrosine-protein phosphatase non-receptor type 11">
    <location>
        <begin position="2"/>
        <end position="593"/>
    </location>
</feature>
<feature type="domain" description="SH2 1" evidence="5">
    <location>
        <begin position="6"/>
        <end position="102"/>
    </location>
</feature>
<feature type="domain" description="SH2 2" evidence="5">
    <location>
        <begin position="112"/>
        <end position="216"/>
    </location>
</feature>
<feature type="domain" description="Tyrosine-protein phosphatase" evidence="4">
    <location>
        <begin position="247"/>
        <end position="517"/>
    </location>
</feature>
<feature type="active site" description="Phosphocysteine intermediate" evidence="4 6">
    <location>
        <position position="459"/>
    </location>
</feature>
<feature type="binding site" evidence="1">
    <location>
        <position position="425"/>
    </location>
    <ligand>
        <name>substrate</name>
    </ligand>
</feature>
<feature type="binding site" evidence="1">
    <location>
        <begin position="459"/>
        <end position="465"/>
    </location>
    <ligand>
        <name>substrate</name>
    </ligand>
</feature>
<feature type="binding site" evidence="1">
    <location>
        <position position="506"/>
    </location>
    <ligand>
        <name>substrate</name>
    </ligand>
</feature>
<feature type="modified residue" description="N-acetylthreonine" evidence="3">
    <location>
        <position position="2"/>
    </location>
</feature>
<feature type="modified residue" description="Phosphotyrosine" evidence="12">
    <location>
        <position position="62"/>
    </location>
</feature>
<feature type="modified residue" description="Phosphotyrosine" evidence="2">
    <location>
        <position position="66"/>
    </location>
</feature>
<feature type="modified residue" description="Phosphotyrosine; by PDGFR" evidence="2">
    <location>
        <position position="542"/>
    </location>
</feature>
<feature type="modified residue" description="Phosphotyrosine; by PDGFR" evidence="3">
    <location>
        <position position="580"/>
    </location>
</feature>
<feature type="splice variant" id="VSP_060441" description="In isoform 2.">
    <original>G</original>
    <variation>GQALL</variation>
    <location>
        <position position="407"/>
    </location>
</feature>
<feature type="sequence conflict" description="In Ref. 1; AAA20543." evidence="11" ref="1">
    <original>A</original>
    <variation>P</variation>
    <location>
        <position position="75"/>
    </location>
</feature>
<feature type="sequence conflict" description="In Ref. 2; AAA19133." evidence="11" ref="2">
    <original>Y</original>
    <variation>S</variation>
    <location>
        <position position="547"/>
    </location>
</feature>
<protein>
    <recommendedName>
        <fullName>Tyrosine-protein phosphatase non-receptor type 11</fullName>
        <ecNumber evidence="8">3.1.3.48</ecNumber>
    </recommendedName>
    <alternativeName>
        <fullName>Protein-tyrosine phosphatase 1D</fullName>
        <shortName>PTP-1D</shortName>
    </alternativeName>
    <alternativeName>
        <fullName>Protein-tyrosine phosphatase SYP</fullName>
    </alternativeName>
    <alternativeName>
        <fullName>SH-PTP2</fullName>
        <shortName>SHP-2</shortName>
        <shortName>Shp2</shortName>
    </alternativeName>
</protein>